<evidence type="ECO:0000255" key="1">
    <source>
        <dbReference type="HAMAP-Rule" id="MF_01358"/>
    </source>
</evidence>
<name>NUOD_NOCSJ</name>
<organism>
    <name type="scientific">Nocardioides sp. (strain ATCC BAA-499 / JS614)</name>
    <dbReference type="NCBI Taxonomy" id="196162"/>
    <lineage>
        <taxon>Bacteria</taxon>
        <taxon>Bacillati</taxon>
        <taxon>Actinomycetota</taxon>
        <taxon>Actinomycetes</taxon>
        <taxon>Propionibacteriales</taxon>
        <taxon>Nocardioidaceae</taxon>
        <taxon>Nocardioides</taxon>
    </lineage>
</organism>
<dbReference type="EC" id="7.1.1.-" evidence="1"/>
<dbReference type="EMBL" id="CP000509">
    <property type="protein sequence ID" value="ABL80065.1"/>
    <property type="molecule type" value="Genomic_DNA"/>
</dbReference>
<dbReference type="RefSeq" id="WP_011754015.1">
    <property type="nucleotide sequence ID" value="NC_008699.1"/>
</dbReference>
<dbReference type="SMR" id="A1SE30"/>
<dbReference type="STRING" id="196162.Noca_0523"/>
<dbReference type="KEGG" id="nca:Noca_0523"/>
<dbReference type="eggNOG" id="COG0649">
    <property type="taxonomic scope" value="Bacteria"/>
</dbReference>
<dbReference type="HOGENOM" id="CLU_015134_1_2_11"/>
<dbReference type="OrthoDB" id="9801496at2"/>
<dbReference type="Proteomes" id="UP000000640">
    <property type="component" value="Chromosome"/>
</dbReference>
<dbReference type="GO" id="GO:0005886">
    <property type="term" value="C:plasma membrane"/>
    <property type="evidence" value="ECO:0007669"/>
    <property type="project" value="UniProtKB-SubCell"/>
</dbReference>
<dbReference type="GO" id="GO:0051287">
    <property type="term" value="F:NAD binding"/>
    <property type="evidence" value="ECO:0007669"/>
    <property type="project" value="InterPro"/>
</dbReference>
<dbReference type="GO" id="GO:0050136">
    <property type="term" value="F:NADH:ubiquinone reductase (non-electrogenic) activity"/>
    <property type="evidence" value="ECO:0007669"/>
    <property type="project" value="UniProtKB-UniRule"/>
</dbReference>
<dbReference type="GO" id="GO:0048038">
    <property type="term" value="F:quinone binding"/>
    <property type="evidence" value="ECO:0007669"/>
    <property type="project" value="UniProtKB-KW"/>
</dbReference>
<dbReference type="Gene3D" id="1.10.645.10">
    <property type="entry name" value="Cytochrome-c3 Hydrogenase, chain B"/>
    <property type="match status" value="1"/>
</dbReference>
<dbReference type="HAMAP" id="MF_01358">
    <property type="entry name" value="NDH1_NuoD"/>
    <property type="match status" value="1"/>
</dbReference>
<dbReference type="InterPro" id="IPR001135">
    <property type="entry name" value="NADH_Q_OxRdtase_suD"/>
</dbReference>
<dbReference type="InterPro" id="IPR014029">
    <property type="entry name" value="NADH_UbQ_OxRdtase_49kDa_CS"/>
</dbReference>
<dbReference type="InterPro" id="IPR022885">
    <property type="entry name" value="NDH1_su_D/H"/>
</dbReference>
<dbReference type="InterPro" id="IPR029014">
    <property type="entry name" value="NiFe-Hase_large"/>
</dbReference>
<dbReference type="NCBIfam" id="TIGR01962">
    <property type="entry name" value="NuoD"/>
    <property type="match status" value="1"/>
</dbReference>
<dbReference type="NCBIfam" id="NF004739">
    <property type="entry name" value="PRK06075.1"/>
    <property type="match status" value="1"/>
</dbReference>
<dbReference type="PANTHER" id="PTHR11993:SF10">
    <property type="entry name" value="NADH DEHYDROGENASE [UBIQUINONE] IRON-SULFUR PROTEIN 2, MITOCHONDRIAL"/>
    <property type="match status" value="1"/>
</dbReference>
<dbReference type="PANTHER" id="PTHR11993">
    <property type="entry name" value="NADH-UBIQUINONE OXIDOREDUCTASE 49 KDA SUBUNIT"/>
    <property type="match status" value="1"/>
</dbReference>
<dbReference type="Pfam" id="PF00346">
    <property type="entry name" value="Complex1_49kDa"/>
    <property type="match status" value="1"/>
</dbReference>
<dbReference type="SUPFAM" id="SSF56762">
    <property type="entry name" value="HydB/Nqo4-like"/>
    <property type="match status" value="1"/>
</dbReference>
<dbReference type="PROSITE" id="PS00535">
    <property type="entry name" value="COMPLEX1_49K"/>
    <property type="match status" value="1"/>
</dbReference>
<reference key="1">
    <citation type="submission" date="2006-12" db="EMBL/GenBank/DDBJ databases">
        <title>Complete sequence of chromosome 1 of Nocardioides sp. JS614.</title>
        <authorList>
            <person name="Copeland A."/>
            <person name="Lucas S."/>
            <person name="Lapidus A."/>
            <person name="Barry K."/>
            <person name="Detter J.C."/>
            <person name="Glavina del Rio T."/>
            <person name="Hammon N."/>
            <person name="Israni S."/>
            <person name="Dalin E."/>
            <person name="Tice H."/>
            <person name="Pitluck S."/>
            <person name="Thompson L.S."/>
            <person name="Brettin T."/>
            <person name="Bruce D."/>
            <person name="Han C."/>
            <person name="Tapia R."/>
            <person name="Schmutz J."/>
            <person name="Larimer F."/>
            <person name="Land M."/>
            <person name="Hauser L."/>
            <person name="Kyrpides N."/>
            <person name="Kim E."/>
            <person name="Mattes T."/>
            <person name="Gossett J."/>
            <person name="Richardson P."/>
        </authorList>
    </citation>
    <scope>NUCLEOTIDE SEQUENCE [LARGE SCALE GENOMIC DNA]</scope>
    <source>
        <strain>ATCC BAA-499 / JS614</strain>
    </source>
</reference>
<accession>A1SE30</accession>
<feature type="chain" id="PRO_0000357876" description="NADH-quinone oxidoreductase subunit D">
    <location>
        <begin position="1"/>
        <end position="446"/>
    </location>
</feature>
<comment type="function">
    <text evidence="1">NDH-1 shuttles electrons from NADH, via FMN and iron-sulfur (Fe-S) centers, to quinones in the respiratory chain. The immediate electron acceptor for the enzyme in this species is believed to be a menaquinone. Couples the redox reaction to proton translocation (for every two electrons transferred, four hydrogen ions are translocated across the cytoplasmic membrane), and thus conserves the redox energy in a proton gradient.</text>
</comment>
<comment type="catalytic activity">
    <reaction evidence="1">
        <text>a quinone + NADH + 5 H(+)(in) = a quinol + NAD(+) + 4 H(+)(out)</text>
        <dbReference type="Rhea" id="RHEA:57888"/>
        <dbReference type="ChEBI" id="CHEBI:15378"/>
        <dbReference type="ChEBI" id="CHEBI:24646"/>
        <dbReference type="ChEBI" id="CHEBI:57540"/>
        <dbReference type="ChEBI" id="CHEBI:57945"/>
        <dbReference type="ChEBI" id="CHEBI:132124"/>
    </reaction>
</comment>
<comment type="subunit">
    <text evidence="1">NDH-1 is composed of 14 different subunits. Subunits NuoB, C, D, E, F, and G constitute the peripheral sector of the complex.</text>
</comment>
<comment type="subcellular location">
    <subcellularLocation>
        <location evidence="1">Cell membrane</location>
        <topology evidence="1">Peripheral membrane protein</topology>
        <orientation evidence="1">Cytoplasmic side</orientation>
    </subcellularLocation>
</comment>
<comment type="similarity">
    <text evidence="1">Belongs to the complex I 49 kDa subunit family.</text>
</comment>
<keyword id="KW-1003">Cell membrane</keyword>
<keyword id="KW-0472">Membrane</keyword>
<keyword id="KW-0520">NAD</keyword>
<keyword id="KW-0874">Quinone</keyword>
<keyword id="KW-1185">Reference proteome</keyword>
<keyword id="KW-1278">Translocase</keyword>
<keyword id="KW-0813">Transport</keyword>
<gene>
    <name evidence="1" type="primary">nuoD</name>
    <name type="ordered locus">Noca_0523</name>
</gene>
<proteinExistence type="inferred from homology"/>
<protein>
    <recommendedName>
        <fullName evidence="1">NADH-quinone oxidoreductase subunit D</fullName>
        <ecNumber evidence="1">7.1.1.-</ecNumber>
    </recommendedName>
    <alternativeName>
        <fullName evidence="1">NADH dehydrogenase I subunit D</fullName>
    </alternativeName>
    <alternativeName>
        <fullName evidence="1">NDH-1 subunit D</fullName>
    </alternativeName>
</protein>
<sequence length="446" mass="49335">MADQDLYSGSSETTEGRVFTVTGQDWDSIAEGLAEDEAQERIVVNMGPQHPSTHGVLRLILELEGETVTEARAGIGYLHTGIEKNMEYRTWTQGVTFCTRMDYLSPFFNEMTYVLGIERLLDIEDRVPEKAQVMRVLLMELNRISSHLVAIATGGMELGALTVMTIGFRERELVLDLFELITGLRMNHAFIRPGGVAQDMPPGALDEIRGFVALMKKRLPEYADLCNANPIFKGRLEGIGHLDLAGCLALGLTGPVLRSTGYPWDLRKTQPYCGYETYDFDVQTWDTSDSYGRFRIRLNEMWESLRIIEQAADRLAGLDGAPVMIEDKKIGWPSQLAIGSDGMGNSLDHIRHIMGESMEALIHHFKLVTEGFRVPPGQAYVPVESPRGELGAHVVSDGGTRPFRAHFRDPSFTNLQATSVMAEGGMVADVIVAIASIDPVMGGVDR</sequence>